<organism>
    <name type="scientific">Oleidesulfovibrio alaskensis (strain ATCC BAA-1058 / DSM 17464 / G20)</name>
    <name type="common">Desulfovibrio alaskensis</name>
    <dbReference type="NCBI Taxonomy" id="207559"/>
    <lineage>
        <taxon>Bacteria</taxon>
        <taxon>Pseudomonadati</taxon>
        <taxon>Thermodesulfobacteriota</taxon>
        <taxon>Desulfovibrionia</taxon>
        <taxon>Desulfovibrionales</taxon>
        <taxon>Desulfovibrionaceae</taxon>
        <taxon>Oleidesulfovibrio</taxon>
    </lineage>
</organism>
<feature type="chain" id="PRO_1000100355" description="Ribonuclease P protein component">
    <location>
        <begin position="1"/>
        <end position="125"/>
    </location>
</feature>
<keyword id="KW-0255">Endonuclease</keyword>
<keyword id="KW-0378">Hydrolase</keyword>
<keyword id="KW-0540">Nuclease</keyword>
<keyword id="KW-1185">Reference proteome</keyword>
<keyword id="KW-0694">RNA-binding</keyword>
<keyword id="KW-0819">tRNA processing</keyword>
<proteinExistence type="inferred from homology"/>
<name>RNPA_OLEA2</name>
<evidence type="ECO:0000255" key="1">
    <source>
        <dbReference type="HAMAP-Rule" id="MF_00227"/>
    </source>
</evidence>
<accession>Q30YQ3</accession>
<reference key="1">
    <citation type="journal article" date="2011" name="J. Bacteriol.">
        <title>Complete genome sequence and updated annotation of Desulfovibrio alaskensis G20.</title>
        <authorList>
            <person name="Hauser L.J."/>
            <person name="Land M.L."/>
            <person name="Brown S.D."/>
            <person name="Larimer F."/>
            <person name="Keller K.L."/>
            <person name="Rapp-Giles B.J."/>
            <person name="Price M.N."/>
            <person name="Lin M."/>
            <person name="Bruce D.C."/>
            <person name="Detter J.C."/>
            <person name="Tapia R."/>
            <person name="Han C.S."/>
            <person name="Goodwin L.A."/>
            <person name="Cheng J.F."/>
            <person name="Pitluck S."/>
            <person name="Copeland A."/>
            <person name="Lucas S."/>
            <person name="Nolan M."/>
            <person name="Lapidus A.L."/>
            <person name="Palumbo A.V."/>
            <person name="Wall J.D."/>
        </authorList>
    </citation>
    <scope>NUCLEOTIDE SEQUENCE [LARGE SCALE GENOMIC DNA]</scope>
    <source>
        <strain>ATCC BAA-1058 / DSM 17464 / G20</strain>
    </source>
</reference>
<sequence length="125" mass="14652">MLARPSRLTRRPDYVACYNTGRRYFSKHFIVFALEREGAAPVWRYGLAVSRKVGDAVRRNRTKRVLREFFRLYQDDMPGGMDLVVVPKRRLDPRRVTLDLAVQELLPLMREIRDSLCREANDGTP</sequence>
<protein>
    <recommendedName>
        <fullName evidence="1">Ribonuclease P protein component</fullName>
        <shortName evidence="1">RNase P protein</shortName>
        <shortName evidence="1">RNaseP protein</shortName>
        <ecNumber evidence="1">3.1.26.5</ecNumber>
    </recommendedName>
    <alternativeName>
        <fullName evidence="1">Protein C5</fullName>
    </alternativeName>
</protein>
<gene>
    <name evidence="1" type="primary">rnpA</name>
    <name type="ordered locus">Dde_2396</name>
</gene>
<dbReference type="EC" id="3.1.26.5" evidence="1"/>
<dbReference type="EMBL" id="CP000112">
    <property type="protein sequence ID" value="ABB39193.1"/>
    <property type="molecule type" value="Genomic_DNA"/>
</dbReference>
<dbReference type="RefSeq" id="WP_011368266.1">
    <property type="nucleotide sequence ID" value="NC_007519.1"/>
</dbReference>
<dbReference type="SMR" id="Q30YQ3"/>
<dbReference type="STRING" id="207559.Dde_2396"/>
<dbReference type="KEGG" id="dde:Dde_2396"/>
<dbReference type="eggNOG" id="COG0594">
    <property type="taxonomic scope" value="Bacteria"/>
</dbReference>
<dbReference type="HOGENOM" id="CLU_117179_9_2_7"/>
<dbReference type="Proteomes" id="UP000002710">
    <property type="component" value="Chromosome"/>
</dbReference>
<dbReference type="GO" id="GO:0030677">
    <property type="term" value="C:ribonuclease P complex"/>
    <property type="evidence" value="ECO:0007669"/>
    <property type="project" value="TreeGrafter"/>
</dbReference>
<dbReference type="GO" id="GO:0042781">
    <property type="term" value="F:3'-tRNA processing endoribonuclease activity"/>
    <property type="evidence" value="ECO:0007669"/>
    <property type="project" value="TreeGrafter"/>
</dbReference>
<dbReference type="GO" id="GO:0004526">
    <property type="term" value="F:ribonuclease P activity"/>
    <property type="evidence" value="ECO:0007669"/>
    <property type="project" value="UniProtKB-UniRule"/>
</dbReference>
<dbReference type="GO" id="GO:0000049">
    <property type="term" value="F:tRNA binding"/>
    <property type="evidence" value="ECO:0007669"/>
    <property type="project" value="UniProtKB-UniRule"/>
</dbReference>
<dbReference type="GO" id="GO:0001682">
    <property type="term" value="P:tRNA 5'-leader removal"/>
    <property type="evidence" value="ECO:0007669"/>
    <property type="project" value="UniProtKB-UniRule"/>
</dbReference>
<dbReference type="Gene3D" id="3.30.230.10">
    <property type="match status" value="1"/>
</dbReference>
<dbReference type="HAMAP" id="MF_00227">
    <property type="entry name" value="RNase_P"/>
    <property type="match status" value="1"/>
</dbReference>
<dbReference type="InterPro" id="IPR020568">
    <property type="entry name" value="Ribosomal_Su5_D2-typ_SF"/>
</dbReference>
<dbReference type="InterPro" id="IPR014721">
    <property type="entry name" value="Ribsml_uS5_D2-typ_fold_subgr"/>
</dbReference>
<dbReference type="InterPro" id="IPR000100">
    <property type="entry name" value="RNase_P"/>
</dbReference>
<dbReference type="NCBIfam" id="TIGR00188">
    <property type="entry name" value="rnpA"/>
    <property type="match status" value="1"/>
</dbReference>
<dbReference type="PANTHER" id="PTHR33992">
    <property type="entry name" value="RIBONUCLEASE P PROTEIN COMPONENT"/>
    <property type="match status" value="1"/>
</dbReference>
<dbReference type="PANTHER" id="PTHR33992:SF1">
    <property type="entry name" value="RIBONUCLEASE P PROTEIN COMPONENT"/>
    <property type="match status" value="1"/>
</dbReference>
<dbReference type="Pfam" id="PF00825">
    <property type="entry name" value="Ribonuclease_P"/>
    <property type="match status" value="1"/>
</dbReference>
<dbReference type="SUPFAM" id="SSF54211">
    <property type="entry name" value="Ribosomal protein S5 domain 2-like"/>
    <property type="match status" value="1"/>
</dbReference>
<comment type="function">
    <text evidence="1">RNaseP catalyzes the removal of the 5'-leader sequence from pre-tRNA to produce the mature 5'-terminus. It can also cleave other RNA substrates such as 4.5S RNA. The protein component plays an auxiliary but essential role in vivo by binding to the 5'-leader sequence and broadening the substrate specificity of the ribozyme.</text>
</comment>
<comment type="catalytic activity">
    <reaction evidence="1">
        <text>Endonucleolytic cleavage of RNA, removing 5'-extranucleotides from tRNA precursor.</text>
        <dbReference type="EC" id="3.1.26.5"/>
    </reaction>
</comment>
<comment type="subunit">
    <text evidence="1">Consists of a catalytic RNA component (M1 or rnpB) and a protein subunit.</text>
</comment>
<comment type="similarity">
    <text evidence="1">Belongs to the RnpA family.</text>
</comment>